<protein>
    <recommendedName>
        <fullName>Purine permease 3</fullName>
        <shortName>AtPUP3</shortName>
    </recommendedName>
</protein>
<organism>
    <name type="scientific">Arabidopsis thaliana</name>
    <name type="common">Mouse-ear cress</name>
    <dbReference type="NCBI Taxonomy" id="3702"/>
    <lineage>
        <taxon>Eukaryota</taxon>
        <taxon>Viridiplantae</taxon>
        <taxon>Streptophyta</taxon>
        <taxon>Embryophyta</taxon>
        <taxon>Tracheophyta</taxon>
        <taxon>Spermatophyta</taxon>
        <taxon>Magnoliopsida</taxon>
        <taxon>eudicotyledons</taxon>
        <taxon>Gunneridae</taxon>
        <taxon>Pentapetalae</taxon>
        <taxon>rosids</taxon>
        <taxon>malvids</taxon>
        <taxon>Brassicales</taxon>
        <taxon>Brassicaceae</taxon>
        <taxon>Camelineae</taxon>
        <taxon>Arabidopsis</taxon>
    </lineage>
</organism>
<gene>
    <name type="primary">PUP3</name>
    <name type="ordered locus">At1g28220</name>
    <name type="ORF">F3H9.12</name>
</gene>
<proteinExistence type="evidence at transcript level"/>
<reference key="1">
    <citation type="journal article" date="2000" name="Nature">
        <title>Sequence and analysis of chromosome 1 of the plant Arabidopsis thaliana.</title>
        <authorList>
            <person name="Theologis A."/>
            <person name="Ecker J.R."/>
            <person name="Palm C.J."/>
            <person name="Federspiel N.A."/>
            <person name="Kaul S."/>
            <person name="White O."/>
            <person name="Alonso J."/>
            <person name="Altafi H."/>
            <person name="Araujo R."/>
            <person name="Bowman C.L."/>
            <person name="Brooks S.Y."/>
            <person name="Buehler E."/>
            <person name="Chan A."/>
            <person name="Chao Q."/>
            <person name="Chen H."/>
            <person name="Cheuk R.F."/>
            <person name="Chin C.W."/>
            <person name="Chung M.K."/>
            <person name="Conn L."/>
            <person name="Conway A.B."/>
            <person name="Conway A.R."/>
            <person name="Creasy T.H."/>
            <person name="Dewar K."/>
            <person name="Dunn P."/>
            <person name="Etgu P."/>
            <person name="Feldblyum T.V."/>
            <person name="Feng J.-D."/>
            <person name="Fong B."/>
            <person name="Fujii C.Y."/>
            <person name="Gill J.E."/>
            <person name="Goldsmith A.D."/>
            <person name="Haas B."/>
            <person name="Hansen N.F."/>
            <person name="Hughes B."/>
            <person name="Huizar L."/>
            <person name="Hunter J.L."/>
            <person name="Jenkins J."/>
            <person name="Johnson-Hopson C."/>
            <person name="Khan S."/>
            <person name="Khaykin E."/>
            <person name="Kim C.J."/>
            <person name="Koo H.L."/>
            <person name="Kremenetskaia I."/>
            <person name="Kurtz D.B."/>
            <person name="Kwan A."/>
            <person name="Lam B."/>
            <person name="Langin-Hooper S."/>
            <person name="Lee A."/>
            <person name="Lee J.M."/>
            <person name="Lenz C.A."/>
            <person name="Li J.H."/>
            <person name="Li Y.-P."/>
            <person name="Lin X."/>
            <person name="Liu S.X."/>
            <person name="Liu Z.A."/>
            <person name="Luros J.S."/>
            <person name="Maiti R."/>
            <person name="Marziali A."/>
            <person name="Militscher J."/>
            <person name="Miranda M."/>
            <person name="Nguyen M."/>
            <person name="Nierman W.C."/>
            <person name="Osborne B.I."/>
            <person name="Pai G."/>
            <person name="Peterson J."/>
            <person name="Pham P.K."/>
            <person name="Rizzo M."/>
            <person name="Rooney T."/>
            <person name="Rowley D."/>
            <person name="Sakano H."/>
            <person name="Salzberg S.L."/>
            <person name="Schwartz J.R."/>
            <person name="Shinn P."/>
            <person name="Southwick A.M."/>
            <person name="Sun H."/>
            <person name="Tallon L.J."/>
            <person name="Tambunga G."/>
            <person name="Toriumi M.J."/>
            <person name="Town C.D."/>
            <person name="Utterback T."/>
            <person name="Van Aken S."/>
            <person name="Vaysberg M."/>
            <person name="Vysotskaia V.S."/>
            <person name="Walker M."/>
            <person name="Wu D."/>
            <person name="Yu G."/>
            <person name="Fraser C.M."/>
            <person name="Venter J.C."/>
            <person name="Davis R.W."/>
        </authorList>
    </citation>
    <scope>NUCLEOTIDE SEQUENCE [LARGE SCALE GENOMIC DNA]</scope>
    <source>
        <strain>cv. Columbia</strain>
    </source>
</reference>
<reference key="2">
    <citation type="journal article" date="2017" name="Plant J.">
        <title>Araport11: a complete reannotation of the Arabidopsis thaliana reference genome.</title>
        <authorList>
            <person name="Cheng C.Y."/>
            <person name="Krishnakumar V."/>
            <person name="Chan A.P."/>
            <person name="Thibaud-Nissen F."/>
            <person name="Schobel S."/>
            <person name="Town C.D."/>
        </authorList>
    </citation>
    <scope>GENOME REANNOTATION</scope>
    <source>
        <strain>cv. Columbia</strain>
    </source>
</reference>
<reference key="3">
    <citation type="journal article" date="2000" name="Plant Cell">
        <title>A new family of high-affinity transporters for adenine, cytosine, and purine derivatives in Arabidopsis.</title>
        <authorList>
            <person name="Gillissen B."/>
            <person name="Buerkle L."/>
            <person name="Andre B."/>
            <person name="Kuehn C."/>
            <person name="Rentsch D."/>
            <person name="Brandl B."/>
            <person name="Frommer W.B."/>
        </authorList>
    </citation>
    <scope>GENE FAMILY</scope>
    <scope>NOMENCLATURE</scope>
</reference>
<reference key="4">
    <citation type="journal article" date="2003" name="Plant J.">
        <title>Transport of cytokinins mediated by purine transporters of the PUP family expressed in phloem, hydathodes, and pollen of Arabidopsis.</title>
        <authorList>
            <person name="Buerkle L."/>
            <person name="Cedzich A."/>
            <person name="Doepke C."/>
            <person name="Stransky H."/>
            <person name="Okumoto S."/>
            <person name="Gillissen B."/>
            <person name="Kuehn C."/>
            <person name="Frommer W.B."/>
        </authorList>
    </citation>
    <scope>FUNCTION</scope>
    <scope>TISSUE SPECIFICITY</scope>
    <scope>GENE FAMILY</scope>
    <scope>NOMENCLATURE</scope>
</reference>
<keyword id="KW-0472">Membrane</keyword>
<keyword id="KW-1185">Reference proteome</keyword>
<keyword id="KW-0812">Transmembrane</keyword>
<keyword id="KW-1133">Transmembrane helix</keyword>
<keyword id="KW-0813">Transport</keyword>
<comment type="function">
    <text evidence="3">May be involved in transport of purine derivatives during pollen germination and tube elongation.</text>
</comment>
<comment type="subcellular location">
    <subcellularLocation>
        <location evidence="4">Membrane</location>
        <topology evidence="4">Multi-pass membrane protein</topology>
    </subcellularLocation>
</comment>
<comment type="tissue specificity">
    <text evidence="3">Restricted to pollen.</text>
</comment>
<comment type="similarity">
    <text evidence="4">Belongs to the purine permeases (TC 2.A.7.14) family.</text>
</comment>
<sequence>MVKALVIINCIILAIGNCGGPLIMRLYFNNGGKRIWFSTFLETAGFPVIFIPLLFSYITRRRSNNVGDSTSFFLIKPRLLIAAVIVGILSGFDNYLYAYGIAYLPVSTAALIIASQLAFIAIFSFFMVKHKFTPFTINAVVLLTVGAAVLGMHTETDKPVHETHKQYITGFLITVAAAVMYAFILPLVELAYQKAKQTMSYTLVLEFQLILCLLASIVSVIGMFIAGDFKALPKEAREFKLGEALFYVVAVFSAIIWQGFFLGAIGLIFSTSSLVSGIMISVLLPITEVLAVIFYHEKFQAEKGLSLALSLWGFVSYFYGEIKSGEDKRRIQQEESQETEQSSLSRPISEC</sequence>
<accession>Q9FZ95</accession>
<name>PUP3_ARATH</name>
<dbReference type="EMBL" id="AC021044">
    <property type="protein sequence ID" value="AAF98433.1"/>
    <property type="molecule type" value="Genomic_DNA"/>
</dbReference>
<dbReference type="EMBL" id="CP002684">
    <property type="protein sequence ID" value="AEE30933.1"/>
    <property type="molecule type" value="Genomic_DNA"/>
</dbReference>
<dbReference type="PIR" id="C86408">
    <property type="entry name" value="C86408"/>
</dbReference>
<dbReference type="RefSeq" id="NP_174143.1">
    <property type="nucleotide sequence ID" value="NM_102587.2"/>
</dbReference>
<dbReference type="SMR" id="Q9FZ95"/>
<dbReference type="BioGRID" id="24951">
    <property type="interactions" value="13"/>
</dbReference>
<dbReference type="IntAct" id="Q9FZ95">
    <property type="interactions" value="12"/>
</dbReference>
<dbReference type="STRING" id="3702.Q9FZ95"/>
<dbReference type="PaxDb" id="3702-AT1G28220.1"/>
<dbReference type="EnsemblPlants" id="AT1G28220.1">
    <property type="protein sequence ID" value="AT1G28220.1"/>
    <property type="gene ID" value="AT1G28220"/>
</dbReference>
<dbReference type="GeneID" id="839716"/>
<dbReference type="Gramene" id="AT1G28220.1">
    <property type="protein sequence ID" value="AT1G28220.1"/>
    <property type="gene ID" value="AT1G28220"/>
</dbReference>
<dbReference type="KEGG" id="ath:AT1G28220"/>
<dbReference type="Araport" id="AT1G28220"/>
<dbReference type="TAIR" id="AT1G28220">
    <property type="gene designation" value="PUP3"/>
</dbReference>
<dbReference type="eggNOG" id="ENOG502QTN9">
    <property type="taxonomic scope" value="Eukaryota"/>
</dbReference>
<dbReference type="HOGENOM" id="CLU_043459_1_1_1"/>
<dbReference type="InParanoid" id="Q9FZ95"/>
<dbReference type="OMA" id="YNLIIWS"/>
<dbReference type="OrthoDB" id="1865379at2759"/>
<dbReference type="PhylomeDB" id="Q9FZ95"/>
<dbReference type="PRO" id="PR:Q9FZ95"/>
<dbReference type="Proteomes" id="UP000006548">
    <property type="component" value="Chromosome 1"/>
</dbReference>
<dbReference type="ExpressionAtlas" id="Q9FZ95">
    <property type="expression patterns" value="baseline and differential"/>
</dbReference>
<dbReference type="GO" id="GO:0016020">
    <property type="term" value="C:membrane"/>
    <property type="evidence" value="ECO:0000304"/>
    <property type="project" value="TAIR"/>
</dbReference>
<dbReference type="GO" id="GO:0005345">
    <property type="term" value="F:purine nucleobase transmembrane transporter activity"/>
    <property type="evidence" value="ECO:0000304"/>
    <property type="project" value="TAIR"/>
</dbReference>
<dbReference type="GO" id="GO:0015211">
    <property type="term" value="F:purine nucleoside transmembrane transporter activity"/>
    <property type="evidence" value="ECO:0007669"/>
    <property type="project" value="InterPro"/>
</dbReference>
<dbReference type="GO" id="GO:0006863">
    <property type="term" value="P:purine nucleobase transport"/>
    <property type="evidence" value="ECO:0000304"/>
    <property type="project" value="TAIR"/>
</dbReference>
<dbReference type="InterPro" id="IPR030182">
    <property type="entry name" value="PUP_plant"/>
</dbReference>
<dbReference type="PANTHER" id="PTHR31376">
    <property type="entry name" value="OS09G0467300 PROTEIN-RELATED"/>
    <property type="match status" value="1"/>
</dbReference>
<dbReference type="PANTHER" id="PTHR31376:SF54">
    <property type="entry name" value="PURINE PERMEASE 3"/>
    <property type="match status" value="1"/>
</dbReference>
<dbReference type="Pfam" id="PF16913">
    <property type="entry name" value="PUNUT"/>
    <property type="match status" value="1"/>
</dbReference>
<dbReference type="SUPFAM" id="SSF103481">
    <property type="entry name" value="Multidrug resistance efflux transporter EmrE"/>
    <property type="match status" value="1"/>
</dbReference>
<feature type="chain" id="PRO_0000317390" description="Purine permease 3">
    <location>
        <begin position="1"/>
        <end position="351"/>
    </location>
</feature>
<feature type="transmembrane region" description="Helical" evidence="1">
    <location>
        <begin position="4"/>
        <end position="24"/>
    </location>
</feature>
<feature type="transmembrane region" description="Helical" evidence="1">
    <location>
        <begin position="35"/>
        <end position="55"/>
    </location>
</feature>
<feature type="transmembrane region" description="Helical" evidence="1">
    <location>
        <begin position="72"/>
        <end position="92"/>
    </location>
</feature>
<feature type="transmembrane region" description="Helical" evidence="1">
    <location>
        <begin position="108"/>
        <end position="128"/>
    </location>
</feature>
<feature type="transmembrane region" description="Helical" evidence="1">
    <location>
        <begin position="132"/>
        <end position="152"/>
    </location>
</feature>
<feature type="transmembrane region" description="Helical" evidence="1">
    <location>
        <begin position="168"/>
        <end position="188"/>
    </location>
</feature>
<feature type="transmembrane region" description="Helical" evidence="1">
    <location>
        <begin position="207"/>
        <end position="227"/>
    </location>
</feature>
<feature type="transmembrane region" description="Helical" evidence="1">
    <location>
        <begin position="249"/>
        <end position="269"/>
    </location>
</feature>
<feature type="transmembrane region" description="Helical" evidence="1">
    <location>
        <begin position="274"/>
        <end position="294"/>
    </location>
</feature>
<feature type="transmembrane region" description="Helical" evidence="1">
    <location>
        <begin position="304"/>
        <end position="324"/>
    </location>
</feature>
<feature type="domain" description="EamA">
    <location>
        <begin position="45"/>
        <end position="152"/>
    </location>
</feature>
<feature type="region of interest" description="Disordered" evidence="2">
    <location>
        <begin position="329"/>
        <end position="351"/>
    </location>
</feature>
<evidence type="ECO:0000255" key="1"/>
<evidence type="ECO:0000256" key="2">
    <source>
        <dbReference type="SAM" id="MobiDB-lite"/>
    </source>
</evidence>
<evidence type="ECO:0000269" key="3">
    <source>
    </source>
</evidence>
<evidence type="ECO:0000305" key="4"/>